<proteinExistence type="inferred from homology"/>
<keyword id="KW-0165">Cleavage on pair of basic residues</keyword>
<keyword id="KW-1015">Disulfide bond</keyword>
<keyword id="KW-0325">Glycoprotein</keyword>
<keyword id="KW-0339">Growth factor</keyword>
<keyword id="KW-0964">Secreted</keyword>
<keyword id="KW-0732">Signal</keyword>
<comment type="function">
    <text evidence="1">Promotes the survival of neuronal populations that are all located either in the central nervous system or directly connected to it.</text>
</comment>
<comment type="subcellular location">
    <subcellularLocation>
        <location evidence="1">Secreted</location>
    </subcellularLocation>
</comment>
<comment type="similarity">
    <text evidence="3">Belongs to the NGF-beta family.</text>
</comment>
<sequence>SCMKAAPMKEASIRGQGSLAYPGLRAQGNLETLGGPNDATRGLTSLADTFEHVIEELLDEQQVIQPSKENKDADLYSTRVMLSSQVPLEPPLLFLLEEYKNYLDAANMSMRVRRHSDPARRGELSVCDSTSEWVTAAEKKTAVDMSGATVTVLEKVPVPKGQLKQYFYETKCSLKGYAKEGCRGIDKRYWNSQCRTTQSYVRALTMDNKKRVGWRFIRIDTSC</sequence>
<feature type="signal peptide" evidence="2">
    <location>
        <begin position="1" status="less than"/>
        <end position="5"/>
    </location>
</feature>
<feature type="propeptide" id="PRO_0000346699" evidence="1">
    <location>
        <begin position="6"/>
        <end position="114"/>
    </location>
</feature>
<feature type="chain" id="PRO_0000346700" description="Neurotrophic factor BDNF">
    <location>
        <begin position="115"/>
        <end position="223" status="greater than"/>
    </location>
</feature>
<feature type="glycosylation site" description="N-linked (GlcNAc...) asparagine" evidence="2">
    <location>
        <position position="107"/>
    </location>
</feature>
<feature type="disulfide bond" evidence="1">
    <location>
        <begin position="127"/>
        <end position="194"/>
    </location>
</feature>
<feature type="disulfide bond" evidence="1">
    <location>
        <begin position="172"/>
        <end position="223"/>
    </location>
</feature>
<feature type="non-terminal residue">
    <location>
        <position position="1"/>
    </location>
</feature>
<feature type="non-terminal residue">
    <location>
        <position position="223"/>
    </location>
</feature>
<gene>
    <name type="primary">BDNF</name>
</gene>
<protein>
    <recommendedName>
        <fullName evidence="3">Neurotrophic factor BDNF precursor form</fullName>
        <shortName>proBDNF</shortName>
    </recommendedName>
    <alternativeName>
        <fullName>Brain-derived neurotrophic factor</fullName>
    </alternativeName>
    <component>
        <recommendedName>
            <fullName>Neurotrophic factor BDNF</fullName>
        </recommendedName>
    </component>
</protein>
<evidence type="ECO:0000250" key="1"/>
<evidence type="ECO:0000255" key="2"/>
<evidence type="ECO:0000305" key="3"/>
<accession>Q1X6Z9</accession>
<organism>
    <name type="scientific">Tropidophis haetianus</name>
    <name type="common">Haitian dwarf boa</name>
    <dbReference type="NCBI Taxonomy" id="51980"/>
    <lineage>
        <taxon>Eukaryota</taxon>
        <taxon>Metazoa</taxon>
        <taxon>Chordata</taxon>
        <taxon>Craniata</taxon>
        <taxon>Vertebrata</taxon>
        <taxon>Euteleostomi</taxon>
        <taxon>Lepidosauria</taxon>
        <taxon>Squamata</taxon>
        <taxon>Bifurcata</taxon>
        <taxon>Unidentata</taxon>
        <taxon>Episquamata</taxon>
        <taxon>Toxicofera</taxon>
        <taxon>Serpentes</taxon>
        <taxon>Henophidia</taxon>
        <taxon>Tropidophiidae</taxon>
        <taxon>Tropidophis</taxon>
    </lineage>
</organism>
<name>BDNF_TROHA</name>
<reference key="1">
    <citation type="journal article" date="2006" name="Mol. Phylogenet. Evol.">
        <title>Dispersal and vicariance: the complex evolutionary history of boid snakes.</title>
        <authorList>
            <person name="Noonan B.P."/>
            <person name="Chippindale P.T."/>
        </authorList>
    </citation>
    <scope>NUCLEOTIDE SEQUENCE [GENOMIC DNA]</scope>
</reference>
<dbReference type="EMBL" id="AY988039">
    <property type="protein sequence ID" value="AAY44246.1"/>
    <property type="molecule type" value="Genomic_DNA"/>
</dbReference>
<dbReference type="SMR" id="Q1X6Z9"/>
<dbReference type="GlyCosmos" id="Q1X6Z9">
    <property type="glycosylation" value="1 site, No reported glycans"/>
</dbReference>
<dbReference type="GO" id="GO:0030424">
    <property type="term" value="C:axon"/>
    <property type="evidence" value="ECO:0007669"/>
    <property type="project" value="TreeGrafter"/>
</dbReference>
<dbReference type="GO" id="GO:0030425">
    <property type="term" value="C:dendrite"/>
    <property type="evidence" value="ECO:0007669"/>
    <property type="project" value="TreeGrafter"/>
</dbReference>
<dbReference type="GO" id="GO:0005615">
    <property type="term" value="C:extracellular space"/>
    <property type="evidence" value="ECO:0007669"/>
    <property type="project" value="TreeGrafter"/>
</dbReference>
<dbReference type="GO" id="GO:0008021">
    <property type="term" value="C:synaptic vesicle"/>
    <property type="evidence" value="ECO:0007669"/>
    <property type="project" value="TreeGrafter"/>
</dbReference>
<dbReference type="GO" id="GO:0008083">
    <property type="term" value="F:growth factor activity"/>
    <property type="evidence" value="ECO:0007669"/>
    <property type="project" value="UniProtKB-KW"/>
</dbReference>
<dbReference type="GO" id="GO:0005163">
    <property type="term" value="F:nerve growth factor receptor binding"/>
    <property type="evidence" value="ECO:0007669"/>
    <property type="project" value="TreeGrafter"/>
</dbReference>
<dbReference type="GO" id="GO:0007169">
    <property type="term" value="P:cell surface receptor protein tyrosine kinase signaling pathway"/>
    <property type="evidence" value="ECO:0007669"/>
    <property type="project" value="TreeGrafter"/>
</dbReference>
<dbReference type="GO" id="GO:0050804">
    <property type="term" value="P:modulation of chemical synaptic transmission"/>
    <property type="evidence" value="ECO:0007669"/>
    <property type="project" value="TreeGrafter"/>
</dbReference>
<dbReference type="GO" id="GO:0043524">
    <property type="term" value="P:negative regulation of neuron apoptotic process"/>
    <property type="evidence" value="ECO:0007669"/>
    <property type="project" value="TreeGrafter"/>
</dbReference>
<dbReference type="GO" id="GO:0021675">
    <property type="term" value="P:nerve development"/>
    <property type="evidence" value="ECO:0007669"/>
    <property type="project" value="TreeGrafter"/>
</dbReference>
<dbReference type="GO" id="GO:0038180">
    <property type="term" value="P:nerve growth factor signaling pathway"/>
    <property type="evidence" value="ECO:0007669"/>
    <property type="project" value="TreeGrafter"/>
</dbReference>
<dbReference type="GO" id="GO:0048812">
    <property type="term" value="P:neuron projection morphogenesis"/>
    <property type="evidence" value="ECO:0007669"/>
    <property type="project" value="TreeGrafter"/>
</dbReference>
<dbReference type="FunFam" id="2.10.90.10:FF:000002">
    <property type="entry name" value="Brain-derived neurotrophic factor"/>
    <property type="match status" value="1"/>
</dbReference>
<dbReference type="Gene3D" id="2.10.90.10">
    <property type="entry name" value="Cystine-knot cytokines"/>
    <property type="match status" value="1"/>
</dbReference>
<dbReference type="InterPro" id="IPR020430">
    <property type="entry name" value="Brain-der_neurotrophic_factor"/>
</dbReference>
<dbReference type="InterPro" id="IPR029034">
    <property type="entry name" value="Cystine-knot_cytokine"/>
</dbReference>
<dbReference type="InterPro" id="IPR020408">
    <property type="entry name" value="Nerve_growth_factor-like"/>
</dbReference>
<dbReference type="InterPro" id="IPR002072">
    <property type="entry name" value="Nerve_growth_factor-rel"/>
</dbReference>
<dbReference type="InterPro" id="IPR019846">
    <property type="entry name" value="Nerve_growth_factor_CS"/>
</dbReference>
<dbReference type="PANTHER" id="PTHR11589:SF3">
    <property type="entry name" value="BRAIN-DERIVED NEUROTROPHIC FACTOR"/>
    <property type="match status" value="1"/>
</dbReference>
<dbReference type="PANTHER" id="PTHR11589">
    <property type="entry name" value="NERVE GROWTH FACTOR NGF -RELATED"/>
    <property type="match status" value="1"/>
</dbReference>
<dbReference type="Pfam" id="PF00243">
    <property type="entry name" value="NGF"/>
    <property type="match status" value="1"/>
</dbReference>
<dbReference type="PIRSF" id="PIRSF001789">
    <property type="entry name" value="NGF"/>
    <property type="match status" value="1"/>
</dbReference>
<dbReference type="PRINTS" id="PR01912">
    <property type="entry name" value="BDNFACTOR"/>
</dbReference>
<dbReference type="PRINTS" id="PR00268">
    <property type="entry name" value="NGF"/>
</dbReference>
<dbReference type="SMART" id="SM00140">
    <property type="entry name" value="NGF"/>
    <property type="match status" value="1"/>
</dbReference>
<dbReference type="SUPFAM" id="SSF57501">
    <property type="entry name" value="Cystine-knot cytokines"/>
    <property type="match status" value="1"/>
</dbReference>
<dbReference type="PROSITE" id="PS00248">
    <property type="entry name" value="NGF_1"/>
    <property type="match status" value="1"/>
</dbReference>
<dbReference type="PROSITE" id="PS50270">
    <property type="entry name" value="NGF_2"/>
    <property type="match status" value="1"/>
</dbReference>